<keyword id="KW-0002">3D-structure</keyword>
<keyword id="KW-0106">Calcium</keyword>
<keyword id="KW-0186">Copper</keyword>
<keyword id="KW-0479">Metal-binding</keyword>
<keyword id="KW-0560">Oxidoreductase</keyword>
<keyword id="KW-1185">Reference proteome</keyword>
<dbReference type="EC" id="1.8.3.7" evidence="1 2"/>
<dbReference type="EMBL" id="CP001738">
    <property type="protein sequence ID" value="ACZ00329.1"/>
    <property type="molecule type" value="Genomic_DNA"/>
</dbReference>
<dbReference type="RefSeq" id="WP_012855110.1">
    <property type="nucleotide sequence ID" value="NC_013510.1"/>
</dbReference>
<dbReference type="PDB" id="5NXL">
    <property type="method" value="X-ray"/>
    <property type="resolution" value="1.66 A"/>
    <property type="chains" value="A=20-303"/>
</dbReference>
<dbReference type="PDB" id="5NYY">
    <property type="method" value="X-ray"/>
    <property type="resolution" value="1.28 A"/>
    <property type="chains" value="A=20-303"/>
</dbReference>
<dbReference type="PDB" id="6S07">
    <property type="method" value="X-ray"/>
    <property type="resolution" value="1.04 A"/>
    <property type="chains" value="A=1-302"/>
</dbReference>
<dbReference type="PDB" id="6XTL">
    <property type="method" value="X-ray"/>
    <property type="resolution" value="1.80 A"/>
    <property type="chains" value="A=1-302"/>
</dbReference>
<dbReference type="PDB" id="6XTM">
    <property type="method" value="X-ray"/>
    <property type="resolution" value="1.25 A"/>
    <property type="chains" value="A=1-302"/>
</dbReference>
<dbReference type="PDB" id="6XTN">
    <property type="method" value="X-ray"/>
    <property type="resolution" value="1.40 A"/>
    <property type="chains" value="A=1-302"/>
</dbReference>
<dbReference type="PDB" id="6XTO">
    <property type="method" value="X-ray"/>
    <property type="resolution" value="1.40 A"/>
    <property type="chains" value="A=1-302"/>
</dbReference>
<dbReference type="PDB" id="6XTP">
    <property type="method" value="X-ray"/>
    <property type="resolution" value="1.80 A"/>
    <property type="chains" value="A=1-302"/>
</dbReference>
<dbReference type="PDB" id="6XTQ">
    <property type="method" value="X-ray"/>
    <property type="resolution" value="1.40 A"/>
    <property type="chains" value="A=1-302"/>
</dbReference>
<dbReference type="PDB" id="6XTR">
    <property type="method" value="X-ray"/>
    <property type="resolution" value="1.20 A"/>
    <property type="chains" value="A=1-302"/>
</dbReference>
<dbReference type="PDB" id="6XTS">
    <property type="method" value="X-ray"/>
    <property type="resolution" value="1.20 A"/>
    <property type="chains" value="A=1-302"/>
</dbReference>
<dbReference type="PDBsum" id="5NXL"/>
<dbReference type="PDBsum" id="5NYY"/>
<dbReference type="PDBsum" id="6S07"/>
<dbReference type="PDBsum" id="6XTL"/>
<dbReference type="PDBsum" id="6XTM"/>
<dbReference type="PDBsum" id="6XTN"/>
<dbReference type="PDBsum" id="6XTO"/>
<dbReference type="PDBsum" id="6XTP"/>
<dbReference type="PDBsum" id="6XTQ"/>
<dbReference type="PDBsum" id="6XTR"/>
<dbReference type="PDBsum" id="6XTS"/>
<dbReference type="SMR" id="D1A7C3"/>
<dbReference type="STRING" id="471852.Tcur_4811"/>
<dbReference type="KEGG" id="tcu:Tcur_4811"/>
<dbReference type="eggNOG" id="COG1262">
    <property type="taxonomic scope" value="Bacteria"/>
</dbReference>
<dbReference type="HOGENOM" id="CLU_012431_4_2_11"/>
<dbReference type="UniPathway" id="UPA00910"/>
<dbReference type="Proteomes" id="UP000001918">
    <property type="component" value="Chromosome"/>
</dbReference>
<dbReference type="GO" id="GO:1903136">
    <property type="term" value="F:cuprous ion binding"/>
    <property type="evidence" value="ECO:0000314"/>
    <property type="project" value="UniProtKB"/>
</dbReference>
<dbReference type="GO" id="GO:0120147">
    <property type="term" value="F:formylglycine-generating oxidase activity"/>
    <property type="evidence" value="ECO:0000314"/>
    <property type="project" value="UniProtKB"/>
</dbReference>
<dbReference type="GO" id="GO:0043687">
    <property type="term" value="P:post-translational protein modification"/>
    <property type="evidence" value="ECO:0000314"/>
    <property type="project" value="UniProtKB"/>
</dbReference>
<dbReference type="GO" id="GO:0018158">
    <property type="term" value="P:protein oxidation"/>
    <property type="evidence" value="ECO:0000314"/>
    <property type="project" value="UniProtKB"/>
</dbReference>
<dbReference type="Gene3D" id="3.90.1580.10">
    <property type="entry name" value="paralog of FGE (formylglycine-generating enzyme)"/>
    <property type="match status" value="1"/>
</dbReference>
<dbReference type="InterPro" id="IPR016187">
    <property type="entry name" value="CTDL_fold"/>
</dbReference>
<dbReference type="InterPro" id="IPR051043">
    <property type="entry name" value="Sulfatase_Mod_Factor_Kinase"/>
</dbReference>
<dbReference type="InterPro" id="IPR005532">
    <property type="entry name" value="SUMF_dom"/>
</dbReference>
<dbReference type="InterPro" id="IPR042095">
    <property type="entry name" value="SUMF_sf"/>
</dbReference>
<dbReference type="PANTHER" id="PTHR23150:SF19">
    <property type="entry name" value="FORMYLGLYCINE-GENERATING ENZYME"/>
    <property type="match status" value="1"/>
</dbReference>
<dbReference type="PANTHER" id="PTHR23150">
    <property type="entry name" value="SULFATASE MODIFYING FACTOR 1, 2"/>
    <property type="match status" value="1"/>
</dbReference>
<dbReference type="Pfam" id="PF03781">
    <property type="entry name" value="FGE-sulfatase"/>
    <property type="match status" value="1"/>
</dbReference>
<dbReference type="SUPFAM" id="SSF56436">
    <property type="entry name" value="C-type lectin-like"/>
    <property type="match status" value="1"/>
</dbReference>
<evidence type="ECO:0000269" key="1">
    <source>
    </source>
</evidence>
<evidence type="ECO:0000269" key="2">
    <source>
    </source>
</evidence>
<evidence type="ECO:0000269" key="3">
    <source>
    </source>
</evidence>
<evidence type="ECO:0000303" key="4">
    <source>
    </source>
</evidence>
<evidence type="ECO:0000303" key="5">
    <source>
    </source>
</evidence>
<evidence type="ECO:0000305" key="6"/>
<evidence type="ECO:0000312" key="7">
    <source>
        <dbReference type="EMBL" id="ACZ00329.1"/>
    </source>
</evidence>
<evidence type="ECO:0007744" key="8">
    <source>
        <dbReference type="PDB" id="5NXL"/>
    </source>
</evidence>
<evidence type="ECO:0007744" key="9">
    <source>
        <dbReference type="PDB" id="5NYY"/>
    </source>
</evidence>
<evidence type="ECO:0007829" key="10">
    <source>
        <dbReference type="PDB" id="6S07"/>
    </source>
</evidence>
<reference key="1">
    <citation type="journal article" date="2011" name="Stand. Genomic Sci.">
        <title>Complete genome sequence of Thermomonospora curvata type strain (B9).</title>
        <authorList>
            <person name="Chertkov O."/>
            <person name="Sikorski J."/>
            <person name="Nolan M."/>
            <person name="Lapidus A."/>
            <person name="Lucas S."/>
            <person name="Del Rio T.G."/>
            <person name="Tice H."/>
            <person name="Cheng J.F."/>
            <person name="Goodwin L."/>
            <person name="Pitluck S."/>
            <person name="Liolios K."/>
            <person name="Ivanova N."/>
            <person name="Mavromatis K."/>
            <person name="Mikhailova N."/>
            <person name="Ovchinnikova G."/>
            <person name="Pati A."/>
            <person name="Chen A."/>
            <person name="Palaniappan K."/>
            <person name="Djao O.D."/>
            <person name="Land M."/>
            <person name="Hauser L."/>
            <person name="Chang Y.J."/>
            <person name="Jeffries C.D."/>
            <person name="Brettin T."/>
            <person name="Han C."/>
            <person name="Detter J.C."/>
            <person name="Rohde M."/>
            <person name="Goeker M."/>
            <person name="Woyke T."/>
            <person name="Bristow J."/>
            <person name="Eisen J.A."/>
            <person name="Markowitz V."/>
            <person name="Hugenholtz P."/>
            <person name="Klenk H.P."/>
            <person name="Kyrpides N.C."/>
        </authorList>
    </citation>
    <scope>NUCLEOTIDE SEQUENCE [LARGE SCALE GENOMIC DNA]</scope>
    <source>
        <strain>ATCC 19995 / DSM 43183 / JCM 3096 / KCTC 9072 / NBRC 15933 / NCIMB 10081 / Henssen B9</strain>
    </source>
</reference>
<reference key="2">
    <citation type="journal article" date="2015" name="ChemBioChem">
        <title>In vitro reconstitution of formylglycine-generating enzymes requires copper(I).</title>
        <authorList>
            <person name="Knop M."/>
            <person name="Engi P."/>
            <person name="Lemnaru R."/>
            <person name="Seebeck F.P."/>
        </authorList>
    </citation>
    <scope>FUNCTION</scope>
    <scope>CATALYTIC ACTIVITY</scope>
    <scope>PATHWAY</scope>
    <scope>COFACTOR</scope>
    <scope>BIOPHYSICOCHEMICAL PROPERTIES</scope>
    <scope>MUTAGENESIS OF CYS-187; CYS-231; CYS-284 AND CYS-298</scope>
</reference>
<reference key="3">
    <citation type="journal article" date="2017" name="ChemBioChem">
        <title>Copper is a cofactor of the formylglycine-generating enzyme.</title>
        <authorList>
            <person name="Knop M."/>
            <person name="Dang T.Q."/>
            <person name="Jeschke G."/>
            <person name="Seebeck F.P."/>
        </authorList>
    </citation>
    <scope>FUNCTION</scope>
    <scope>CATALYTIC ACTIVITY</scope>
    <scope>COFACTOR</scope>
    <scope>BIOPHYSICOCHEMICAL PROPERTIES</scope>
    <scope>MUTAGENESIS OF CYS-187; CYS-231; CYS-269; CYS-274; CYS-284 AND CYS-298</scope>
</reference>
<reference evidence="8 9" key="4">
    <citation type="journal article" date="2017" name="Angew. Chem. Int. Ed. Engl.">
        <title>Structural basis for copper-oxygen mediated C-H bond activation by the formylglycine-generating enzyme.</title>
        <authorList>
            <person name="Meury M."/>
            <person name="Knop M."/>
            <person name="Seebeck F.P."/>
        </authorList>
    </citation>
    <scope>X-RAY CRYSTALLOGRAPHY (1.28 ANGSTROMS) OF 20-303 IN COMPLEX WITH CALCIUM AND SILVER</scope>
    <scope>COPPER-BINDING SITES</scope>
    <scope>REACTION MECHANISM</scope>
</reference>
<protein>
    <recommendedName>
        <fullName evidence="4 5">Formylglycine-generating enzyme</fullName>
        <shortName evidence="4 5">FGE</shortName>
        <ecNumber evidence="1 2">1.8.3.7</ecNumber>
    </recommendedName>
</protein>
<name>FGE_THECD</name>
<proteinExistence type="evidence at protein level"/>
<gene>
    <name evidence="7" type="ordered locus">Tcur_4811</name>
</gene>
<feature type="chain" id="PRO_0000444618" description="Formylglycine-generating enzyme">
    <location>
        <begin position="1"/>
        <end position="303"/>
    </location>
</feature>
<feature type="binding site" evidence="3 8 9">
    <location>
        <position position="188"/>
    </location>
    <ligand>
        <name>Ca(2+)</name>
        <dbReference type="ChEBI" id="CHEBI:29108"/>
        <label>1</label>
    </ligand>
</feature>
<feature type="binding site" evidence="3 8 9">
    <location>
        <position position="189"/>
    </location>
    <ligand>
        <name>Ca(2+)</name>
        <dbReference type="ChEBI" id="CHEBI:29108"/>
        <label>1</label>
    </ligand>
</feature>
<feature type="binding site" evidence="3 8 9">
    <location>
        <position position="202"/>
    </location>
    <ligand>
        <name>Ca(2+)</name>
        <dbReference type="ChEBI" id="CHEBI:29108"/>
        <label>1</label>
    </ligand>
</feature>
<feature type="binding site" evidence="3 8 9">
    <location>
        <position position="204"/>
    </location>
    <ligand>
        <name>Ca(2+)</name>
        <dbReference type="ChEBI" id="CHEBI:29108"/>
        <label>1</label>
    </ligand>
</feature>
<feature type="binding site" evidence="3 8 9">
    <location>
        <position position="222"/>
    </location>
    <ligand>
        <name>Ca(2+)</name>
        <dbReference type="ChEBI" id="CHEBI:29108"/>
        <label>2</label>
    </ligand>
</feature>
<feature type="binding site" evidence="3 8 9">
    <location>
        <position position="223"/>
    </location>
    <ligand>
        <name>Ca(2+)</name>
        <dbReference type="ChEBI" id="CHEBI:29108"/>
        <label>2</label>
    </ligand>
</feature>
<feature type="binding site" evidence="3 8 9">
    <location>
        <position position="225"/>
    </location>
    <ligand>
        <name>Ca(2+)</name>
        <dbReference type="ChEBI" id="CHEBI:29108"/>
        <label>2</label>
    </ligand>
</feature>
<feature type="binding site" evidence="3 8 9">
    <location>
        <position position="227"/>
    </location>
    <ligand>
        <name>Ca(2+)</name>
        <dbReference type="ChEBI" id="CHEBI:29108"/>
        <label>2</label>
    </ligand>
</feature>
<feature type="binding site" evidence="2 3 8 9">
    <location>
        <position position="269"/>
    </location>
    <ligand>
        <name>Cu(+)</name>
        <dbReference type="ChEBI" id="CHEBI:49552"/>
        <note>catalytic</note>
    </ligand>
</feature>
<feature type="binding site" evidence="2 3 8 9">
    <location>
        <position position="274"/>
    </location>
    <ligand>
        <name>Cu(+)</name>
        <dbReference type="ChEBI" id="CHEBI:49552"/>
        <note>catalytic</note>
    </ligand>
</feature>
<feature type="mutagenesis site" description="In 4C; increased formylglycine-generating enzyme activity; when associated with A-231; A-284 and A-298." evidence="1 2">
    <original>C</original>
    <variation>A</variation>
    <location>
        <position position="187"/>
    </location>
</feature>
<feature type="mutagenesis site" description="In 4C; increased formylglycine-generating enzyme activity; when associated with A-187; A-284 and A-298." evidence="1 2">
    <original>C</original>
    <variation>A</variation>
    <location>
        <position position="231"/>
    </location>
</feature>
<feature type="mutagenesis site" description="Abolished formylglycine-generating enzyme activity and ability to bind Cu(+)." evidence="2">
    <original>C</original>
    <variation>S</variation>
    <location>
        <position position="269"/>
    </location>
</feature>
<feature type="mutagenesis site" description="Abolished formylglycine-generating enzyme activity and ability to bind Cu(+)." evidence="2">
    <original>C</original>
    <variation>S</variation>
    <location>
        <position position="274"/>
    </location>
</feature>
<feature type="mutagenesis site" description="In 4C; increased formylglycine-generating enzyme activity; when associated with A-187; A-231 and A-298." evidence="1 2">
    <original>C</original>
    <variation>A</variation>
    <location>
        <position position="284"/>
    </location>
</feature>
<feature type="mutagenesis site" description="In 4C; increased formylglycine-generating enzyme activity; when associated with A-187; A-231 and A-284." evidence="1 2">
    <original>C</original>
    <variation>A</variation>
    <location>
        <position position="298"/>
    </location>
</feature>
<feature type="helix" evidence="10">
    <location>
        <begin position="13"/>
        <end position="17"/>
    </location>
</feature>
<feature type="strand" evidence="10">
    <location>
        <begin position="20"/>
        <end position="23"/>
    </location>
</feature>
<feature type="strand" evidence="10">
    <location>
        <begin position="25"/>
        <end position="31"/>
    </location>
</feature>
<feature type="helix" evidence="10">
    <location>
        <begin position="39"/>
        <end position="41"/>
    </location>
</feature>
<feature type="strand" evidence="10">
    <location>
        <begin position="47"/>
        <end position="51"/>
    </location>
</feature>
<feature type="strand" evidence="10">
    <location>
        <begin position="54"/>
        <end position="59"/>
    </location>
</feature>
<feature type="helix" evidence="10">
    <location>
        <begin position="63"/>
        <end position="73"/>
    </location>
</feature>
<feature type="helix" evidence="10">
    <location>
        <begin position="78"/>
        <end position="82"/>
    </location>
</feature>
<feature type="strand" evidence="10">
    <location>
        <begin position="84"/>
        <end position="88"/>
    </location>
</feature>
<feature type="helix" evidence="10">
    <location>
        <begin position="89"/>
        <end position="91"/>
    </location>
</feature>
<feature type="strand" evidence="10">
    <location>
        <begin position="109"/>
        <end position="113"/>
    </location>
</feature>
<feature type="helix" evidence="10">
    <location>
        <begin position="140"/>
        <end position="149"/>
    </location>
</feature>
<feature type="helix" evidence="10">
    <location>
        <begin position="157"/>
        <end position="165"/>
    </location>
</feature>
<feature type="helix" evidence="10">
    <location>
        <begin position="181"/>
        <end position="183"/>
    </location>
</feature>
<feature type="turn" evidence="10">
    <location>
        <begin position="194"/>
        <end position="196"/>
    </location>
</feature>
<feature type="strand" evidence="10">
    <location>
        <begin position="223"/>
        <end position="234"/>
    </location>
</feature>
<feature type="helix" evidence="10">
    <location>
        <begin position="239"/>
        <end position="241"/>
    </location>
</feature>
<feature type="helix" evidence="10">
    <location>
        <begin position="245"/>
        <end position="248"/>
    </location>
</feature>
<feature type="strand" evidence="10">
    <location>
        <begin position="258"/>
        <end position="264"/>
    </location>
</feature>
<feature type="turn" evidence="10">
    <location>
        <begin position="271"/>
        <end position="274"/>
    </location>
</feature>
<feature type="strand" evidence="10">
    <location>
        <begin position="283"/>
        <end position="285"/>
    </location>
</feature>
<accession>D1A7C3</accession>
<comment type="function">
    <text evidence="1 2">Oxidase that catalyzes the conversion of cysteine to 3-oxoalanine on target proteins. 3-oxoalanine modification, which is also named formylglycine (fGly), occurs in the maturation of arylsulfatases and some alkaline phosphatases that use the hydrated form of 3-oxoalanine as a catalytic nucleophile.</text>
</comment>
<comment type="catalytic activity">
    <reaction evidence="1 2">
        <text>L-cysteinyl-[sulfatase] + 2 a thiol + O2 = an organic disulfide + 3-oxo-L-alanyl-[sulfatase] + hydrogen sulfide + H2O + H(+)</text>
        <dbReference type="Rhea" id="RHEA:51152"/>
        <dbReference type="Rhea" id="RHEA-COMP:12900"/>
        <dbReference type="Rhea" id="RHEA-COMP:12901"/>
        <dbReference type="ChEBI" id="CHEBI:15377"/>
        <dbReference type="ChEBI" id="CHEBI:15378"/>
        <dbReference type="ChEBI" id="CHEBI:15379"/>
        <dbReference type="ChEBI" id="CHEBI:29256"/>
        <dbReference type="ChEBI" id="CHEBI:29919"/>
        <dbReference type="ChEBI" id="CHEBI:29950"/>
        <dbReference type="ChEBI" id="CHEBI:35489"/>
        <dbReference type="ChEBI" id="CHEBI:85621"/>
        <dbReference type="EC" id="1.8.3.7"/>
    </reaction>
</comment>
<comment type="cofactor">
    <cofactor evidence="1 2 3">
        <name>Cu(+)</name>
        <dbReference type="ChEBI" id="CHEBI:49552"/>
    </cofactor>
    <text evidence="3">The catalytic copper is required to activate oxygen and catalyze oxidative C-H activation.</text>
</comment>
<comment type="biophysicochemical properties">
    <kinetics>
        <KM evidence="2">580 uM for [sulfatase]-L-cysteine (in presence of Cu(+))</KM>
        <text evidence="1 2">kcat is 1.6 min(-1) in presence of Cu(+).</text>
    </kinetics>
</comment>
<comment type="pathway">
    <text evidence="1 2">Protein modification; sulfatase oxidation.</text>
</comment>
<comment type="similarity">
    <text evidence="6">Belongs to the sulfatase-modifying factor family.</text>
</comment>
<sequence length="303" mass="33276">MPSFDFDIPRRSPQEIAKGMVAIPGGTFRMGGEDPDAFPEDGEGPVRTVRLSPFLIDRYAVSNRQFAAFVKATGYVTDAERYGWSFVFHAHVAPGTPVMDAVVPEAPWWVAVPGAYWKAPEGPGSSITDRPNHPVVHVSWNDAVAYATWAGKRLPTEAEWEMAARGGLDQARYPWGNELTPRGRHRCNIWQGTFPVHDTGEDGYTGTAPVNAFAPNGYGLYNVAGNVWEWCADWWSADWHATESPATRIDPRGPETGTARVTKGGSFLCHESYCNRYRVAARTCNTPDSSAAHTGFRCAADPL</sequence>
<organism>
    <name type="scientific">Thermomonospora curvata (strain ATCC 19995 / DSM 43183 / JCM 3096 / KCTC 9072 / NBRC 15933 / NCIMB 10081 / Henssen B9)</name>
    <dbReference type="NCBI Taxonomy" id="471852"/>
    <lineage>
        <taxon>Bacteria</taxon>
        <taxon>Bacillati</taxon>
        <taxon>Actinomycetota</taxon>
        <taxon>Actinomycetes</taxon>
        <taxon>Streptosporangiales</taxon>
        <taxon>Thermomonosporaceae</taxon>
        <taxon>Thermomonospora</taxon>
    </lineage>
</organism>